<evidence type="ECO:0000250" key="1">
    <source>
        <dbReference type="UniProtKB" id="P22776"/>
    </source>
</evidence>
<evidence type="ECO:0000305" key="2"/>
<feature type="chain" id="PRO_0000373386" description="Hexon protein p72">
    <location>
        <begin position="1"/>
        <end position="646"/>
    </location>
</feature>
<accession>Q8V9S6</accession>
<sequence length="646" mass="73263">MASGGAFCLIANDGKADKIILAQDLLNSRISNIKNVNKSYGKPDPEPTLSQIEETHMVHFNAHFKPYVPIGFEYNKVRPHTGTPTLGNKLTFGIPQYGDFFHDMVGHHVLGACHSSWQDAPIQGSSQMGAHGQLQTFPRNGYDWDNQTPLEGAVYTLVDPFGRPIVPGTKNAYRNLVYYCEYPGERLYENVRFDVNGNSLDEYSSDVTTLVRKFCIPGDKMTGYKHLVGQEVSVEGTSGPLLCNIHDLHKPHQSKPILTDENDTQRTCTHTNPKFLSQHFPENSHNIQTAGKQDITPITDTTYLDIRRNVQYSCNGPQTPKYYQPPLALWIKLRFWFNENVNLAIPSVSIPFGERFITIKLASQKDLVNEFPGLFVRQSRFIPGRPSRRNIRFKPWFIPGVINEISLTNNELYINNLFVTPEIHNLFVKRVRFSLIRVHKTQVTHTNNNHHDEKLMSALKWPIEYMFIGLKPTWNISDQNPHQHRDWHKFGHVVNAIMQPTHHAEISFQDRDTALPDACSSISDINPVTYPITLPIIKNISVTAHGINLIDKFPSKFCSSYIPFHYGGNSIKTPDDPGAMMITFALKPREEYQPSGHINVSRAREFYISWDTDYVGSITTADLVVSASAINFLLLQNGSAVLRYST</sequence>
<name>CAPSH_ASFM2</name>
<gene>
    <name type="ordered locus">Mal-089</name>
</gene>
<protein>
    <recommendedName>
        <fullName evidence="1">Hexon protein p72</fullName>
    </recommendedName>
    <alternativeName>
        <fullName>Major capsid protein</fullName>
        <shortName>MCP</shortName>
    </alternativeName>
    <alternativeName>
        <fullName>p72</fullName>
    </alternativeName>
    <alternativeName>
        <fullName>p73</fullName>
    </alternativeName>
</protein>
<dbReference type="EMBL" id="AY261361">
    <property type="status" value="NOT_ANNOTATED_CDS"/>
    <property type="molecule type" value="Genomic_DNA"/>
</dbReference>
<dbReference type="EMBL" id="L00966">
    <property type="protein sequence ID" value="AAL31338.1"/>
    <property type="molecule type" value="Genomic_DNA"/>
</dbReference>
<dbReference type="SMR" id="Q8V9S6"/>
<dbReference type="Proteomes" id="UP000000860">
    <property type="component" value="Segment"/>
</dbReference>
<dbReference type="GO" id="GO:0044164">
    <property type="term" value="C:host cell cytosol"/>
    <property type="evidence" value="ECO:0007669"/>
    <property type="project" value="UniProtKB-SubCell"/>
</dbReference>
<dbReference type="GO" id="GO:0044167">
    <property type="term" value="C:host cell endoplasmic reticulum membrane"/>
    <property type="evidence" value="ECO:0007669"/>
    <property type="project" value="UniProtKB-SubCell"/>
</dbReference>
<dbReference type="GO" id="GO:0016020">
    <property type="term" value="C:membrane"/>
    <property type="evidence" value="ECO:0007669"/>
    <property type="project" value="UniProtKB-KW"/>
</dbReference>
<dbReference type="GO" id="GO:0019028">
    <property type="term" value="C:viral capsid"/>
    <property type="evidence" value="ECO:0007669"/>
    <property type="project" value="UniProtKB-KW"/>
</dbReference>
<dbReference type="GO" id="GO:0005198">
    <property type="term" value="F:structural molecule activity"/>
    <property type="evidence" value="ECO:0007669"/>
    <property type="project" value="InterPro"/>
</dbReference>
<dbReference type="GO" id="GO:0046718">
    <property type="term" value="P:symbiont entry into host cell"/>
    <property type="evidence" value="ECO:0007669"/>
    <property type="project" value="UniProtKB-KW"/>
</dbReference>
<dbReference type="GO" id="GO:0019062">
    <property type="term" value="P:virion attachment to host cell"/>
    <property type="evidence" value="ECO:0007669"/>
    <property type="project" value="UniProtKB-KW"/>
</dbReference>
<dbReference type="Gene3D" id="2.70.9.10">
    <property type="entry name" value="Adenovirus Type 2 Hexon, domain 4"/>
    <property type="match status" value="1"/>
</dbReference>
<dbReference type="Gene3D" id="2.70.9.20">
    <property type="entry name" value="Major capsid protein Vp54"/>
    <property type="match status" value="1"/>
</dbReference>
<dbReference type="InterPro" id="IPR007542">
    <property type="entry name" value="MCP_C"/>
</dbReference>
<dbReference type="InterPro" id="IPR038519">
    <property type="entry name" value="MCP_C_sf"/>
</dbReference>
<dbReference type="InterPro" id="IPR016112">
    <property type="entry name" value="VP_dsDNA_II"/>
</dbReference>
<dbReference type="Pfam" id="PF04451">
    <property type="entry name" value="Capsid_NCLDV"/>
    <property type="match status" value="1"/>
</dbReference>
<dbReference type="SUPFAM" id="SSF49749">
    <property type="entry name" value="Group II dsDNA viruses VP"/>
    <property type="match status" value="2"/>
</dbReference>
<keyword id="KW-0167">Capsid protein</keyword>
<keyword id="KW-1035">Host cytoplasm</keyword>
<keyword id="KW-1038">Host endoplasmic reticulum</keyword>
<keyword id="KW-1043">Host membrane</keyword>
<keyword id="KW-0945">Host-virus interaction</keyword>
<keyword id="KW-0426">Late protein</keyword>
<keyword id="KW-0472">Membrane</keyword>
<keyword id="KW-1161">Viral attachment to host cell</keyword>
<keyword id="KW-0946">Virion</keyword>
<keyword id="KW-1160">Virus entry into host cell</keyword>
<comment type="function">
    <text evidence="1">Capsid protein that self-assembles to form the pseudo-hexameric capsomers of the icosahedral capsid (By similarity). The capsid is constructed of 2760 pseudo-hexameric capsomers and 12 pentameric capsomers, with a T=277 symmetry, about 200 nm in diameter (By similarity). The capsid encapsulates the DNA-containing nucleoid, the core shell and the inner membrane (By similarity). Plays an essential role in virion assembly (By similarity). Involved in virus attachment to the host cell (By similarity).</text>
</comment>
<comment type="subunit">
    <text evidence="1">Homotrimer (By similarity). The membrane-bound form, but not the cytosolic one, assembles into large complexes (By similarity). Interacts with the minor capsid proteins M1249L and p17; these interactions form a rigid zipper structure that stabilizes the capsomers (By similarity).</text>
</comment>
<comment type="subcellular location">
    <subcellularLocation>
        <location evidence="1">Virion</location>
    </subcellularLocation>
    <subcellularLocation>
        <location>Host endoplasmic reticulum membrane</location>
        <topology>Peripheral membrane protein</topology>
    </subcellularLocation>
    <subcellularLocation>
        <location evidence="1">Host cytoplasm</location>
        <location evidence="1">Host cytosol</location>
    </subcellularLocation>
    <text evidence="1">Present in the outer part of the capsid shell (By similarity). Localizes to the viral factory at 16 hpi (By similarity).</text>
</comment>
<comment type="induction">
    <text evidence="2">Expressed in the late phase of the viral replicative cycle.</text>
</comment>
<comment type="similarity">
    <text evidence="2">Belongs to the NCLDV major capsid protein family.</text>
</comment>
<organismHost>
    <name type="scientific">Ornithodoros</name>
    <name type="common">relapsing fever ticks</name>
    <dbReference type="NCBI Taxonomy" id="6937"/>
</organismHost>
<organismHost>
    <name type="scientific">Phacochoerus aethiopicus</name>
    <name type="common">Warthog</name>
    <dbReference type="NCBI Taxonomy" id="85517"/>
</organismHost>
<organismHost>
    <name type="scientific">Phacochoerus africanus</name>
    <name type="common">Warthog</name>
    <dbReference type="NCBI Taxonomy" id="41426"/>
</organismHost>
<organismHost>
    <name type="scientific">Potamochoerus larvatus</name>
    <name type="common">Bushpig</name>
    <dbReference type="NCBI Taxonomy" id="273792"/>
</organismHost>
<organismHost>
    <name type="scientific">Sus scrofa</name>
    <name type="common">Pig</name>
    <dbReference type="NCBI Taxonomy" id="9823"/>
</organismHost>
<proteinExistence type="inferred from homology"/>
<reference key="1">
    <citation type="submission" date="2001-11" db="EMBL/GenBank/DDBJ databases">
        <title>Nucleotide sequence and analysis of 16.25 kilobase pairs of the African swine fever virus genome that span the central variable region.</title>
        <authorList>
            <person name="Roberts P.C."/>
            <person name="Lu Z."/>
            <person name="Rock D.L."/>
        </authorList>
    </citation>
    <scope>NUCLEOTIDE SEQUENCE [GENOMIC DNA]</scope>
</reference>
<reference key="2">
    <citation type="submission" date="2003-03" db="EMBL/GenBank/DDBJ databases">
        <title>African swine fever virus genomes.</title>
        <authorList>
            <person name="Kutish G.F."/>
            <person name="Rock D.L."/>
        </authorList>
    </citation>
    <scope>NUCLEOTIDE SEQUENCE [LARGE SCALE GENOMIC DNA]</scope>
</reference>
<organism>
    <name type="scientific">African swine fever virus (isolate Tick/Malawi/Lil 20-1/1983)</name>
    <name type="common">ASFV</name>
    <dbReference type="NCBI Taxonomy" id="10500"/>
    <lineage>
        <taxon>Viruses</taxon>
        <taxon>Varidnaviria</taxon>
        <taxon>Bamfordvirae</taxon>
        <taxon>Nucleocytoviricota</taxon>
        <taxon>Pokkesviricetes</taxon>
        <taxon>Asfuvirales</taxon>
        <taxon>Asfarviridae</taxon>
        <taxon>Asfivirus</taxon>
        <taxon>African swine fever virus</taxon>
    </lineage>
</organism>